<name>RIOK2_CAEEL</name>
<protein>
    <recommendedName>
        <fullName evidence="3">Serine/threonine-protein kinase RIO2</fullName>
        <ecNumber evidence="2">2.7.11.1</ecNumber>
    </recommendedName>
</protein>
<feature type="chain" id="PRO_0000434606" description="Serine/threonine-protein kinase RIO2" evidence="6">
    <location>
        <begin position="1"/>
        <end position="529"/>
    </location>
</feature>
<feature type="domain" description="Protein kinase" evidence="6">
    <location>
        <begin position="97"/>
        <end position="273"/>
    </location>
</feature>
<feature type="region of interest" description="Disordered" evidence="4">
    <location>
        <begin position="331"/>
        <end position="366"/>
    </location>
</feature>
<feature type="region of interest" description="Disordered" evidence="4">
    <location>
        <begin position="411"/>
        <end position="452"/>
    </location>
</feature>
<feature type="compositionally biased region" description="Acidic residues" evidence="4">
    <location>
        <begin position="337"/>
        <end position="346"/>
    </location>
</feature>
<feature type="compositionally biased region" description="Basic and acidic residues" evidence="4">
    <location>
        <begin position="411"/>
        <end position="428"/>
    </location>
</feature>
<feature type="compositionally biased region" description="Acidic residues" evidence="4">
    <location>
        <begin position="429"/>
        <end position="447"/>
    </location>
</feature>
<feature type="active site" description="Proton acceptor" evidence="1">
    <location>
        <position position="228"/>
    </location>
</feature>
<feature type="binding site" evidence="1">
    <location>
        <position position="123"/>
    </location>
    <ligand>
        <name>ATP</name>
        <dbReference type="ChEBI" id="CHEBI:30616"/>
    </ligand>
</feature>
<organism evidence="7">
    <name type="scientific">Caenorhabditis elegans</name>
    <dbReference type="NCBI Taxonomy" id="6239"/>
    <lineage>
        <taxon>Eukaryota</taxon>
        <taxon>Metazoa</taxon>
        <taxon>Ecdysozoa</taxon>
        <taxon>Nematoda</taxon>
        <taxon>Chromadorea</taxon>
        <taxon>Rhabditida</taxon>
        <taxon>Rhabditina</taxon>
        <taxon>Rhabditomorpha</taxon>
        <taxon>Rhabditoidea</taxon>
        <taxon>Rhabditidae</taxon>
        <taxon>Peloderinae</taxon>
        <taxon>Caenorhabditis</taxon>
    </lineage>
</organism>
<evidence type="ECO:0000250" key="1">
    <source>
        <dbReference type="UniProtKB" id="O30245"/>
    </source>
</evidence>
<evidence type="ECO:0000250" key="2">
    <source>
        <dbReference type="UniProtKB" id="P40160"/>
    </source>
</evidence>
<evidence type="ECO:0000250" key="3">
    <source>
        <dbReference type="UniProtKB" id="Q9BVS4"/>
    </source>
</evidence>
<evidence type="ECO:0000256" key="4">
    <source>
        <dbReference type="SAM" id="MobiDB-lite"/>
    </source>
</evidence>
<evidence type="ECO:0000269" key="5">
    <source>
    </source>
</evidence>
<evidence type="ECO:0000305" key="6"/>
<evidence type="ECO:0000312" key="7">
    <source>
        <dbReference type="Proteomes" id="UP000001940"/>
    </source>
</evidence>
<evidence type="ECO:0000312" key="8">
    <source>
        <dbReference type="WormBase" id="Y105E8B.3"/>
    </source>
</evidence>
<sequence>MGRMNVSMMRYLEGDHFRVLIAVEMGMKNHEVVPLALVSAIAGIHRGGVARTLNDLCKHSLVAFERSKKFDGYRLTIRGYDYLALRALCSREVVGSVGNQIGIGKESDVYVGGDPELNDLCLKFHRLGRTSFRKIKEKRDYHKKRKSASWLYLSRLAAAKEFAFLKALQERGFPVPKAVDVCRHLVVMQLVVGQTLCNVTHVEDAGALYDRLMALIVKMARHGVIHGDFNEFNLIMLEDERIVMIDFPQMVSIDHPNAEYYFDRDVTCVRTFFKRKFDYESEDWPKFDEVERKGNMDVLLEASGFTKKMALDLNKAYDEGDFLAHCEQELRNRQEEDLGEDEDDSDDSKSMEDIQEEPEDLEKDHEELQAQENTVKQQKIVLSQTTRFTDWLSDATNQLEAVDLDALKSEEGYKDIELPPEDFKRPADSENDDENDEDEEEGEEEDADGHVAVEEQVAKVVKKKRVPSGARSVASSAATFTAEDVKRRLALDRKRNKEKIRLKVKGKQSAVGRNRKDNKDVIAEYAGWI</sequence>
<comment type="function">
    <text evidence="5">Required for larval development.</text>
</comment>
<comment type="catalytic activity">
    <reaction evidence="2">
        <text>L-seryl-[protein] + ATP = O-phospho-L-seryl-[protein] + ADP + H(+)</text>
        <dbReference type="Rhea" id="RHEA:17989"/>
        <dbReference type="Rhea" id="RHEA-COMP:9863"/>
        <dbReference type="Rhea" id="RHEA-COMP:11604"/>
        <dbReference type="ChEBI" id="CHEBI:15378"/>
        <dbReference type="ChEBI" id="CHEBI:29999"/>
        <dbReference type="ChEBI" id="CHEBI:30616"/>
        <dbReference type="ChEBI" id="CHEBI:83421"/>
        <dbReference type="ChEBI" id="CHEBI:456216"/>
        <dbReference type="EC" id="2.7.11.1"/>
    </reaction>
</comment>
<comment type="catalytic activity">
    <reaction evidence="2">
        <text>L-threonyl-[protein] + ATP = O-phospho-L-threonyl-[protein] + ADP + H(+)</text>
        <dbReference type="Rhea" id="RHEA:46608"/>
        <dbReference type="Rhea" id="RHEA-COMP:11060"/>
        <dbReference type="Rhea" id="RHEA-COMP:11605"/>
        <dbReference type="ChEBI" id="CHEBI:15378"/>
        <dbReference type="ChEBI" id="CHEBI:30013"/>
        <dbReference type="ChEBI" id="CHEBI:30616"/>
        <dbReference type="ChEBI" id="CHEBI:61977"/>
        <dbReference type="ChEBI" id="CHEBI:456216"/>
        <dbReference type="EC" id="2.7.11.1"/>
    </reaction>
</comment>
<comment type="cofactor">
    <cofactor evidence="6">
        <name>Mg(2+)</name>
        <dbReference type="ChEBI" id="CHEBI:18420"/>
    </cofactor>
</comment>
<comment type="tissue specificity">
    <text evidence="5">Expressed in pharynx (metacorpus and posterior bulbus). Expression is restricted to adult stage.</text>
</comment>
<comment type="disruption phenotype">
    <text evidence="5">RNAi-mediated knockdown causes early larval arrest. In adults, results in no obvious phenotype.</text>
</comment>
<comment type="similarity">
    <text evidence="6">Belongs to the protein kinase superfamily. RIO-type Ser/Thr kinase family.</text>
</comment>
<proteinExistence type="evidence at transcript level"/>
<reference evidence="7" key="1">
    <citation type="journal article" date="1998" name="Science">
        <title>Genome sequence of the nematode C. elegans: a platform for investigating biology.</title>
        <authorList>
            <consortium name="The C. elegans sequencing consortium"/>
        </authorList>
    </citation>
    <scope>NUCLEOTIDE SEQUENCE [LARGE SCALE GENOMIC DNA]</scope>
    <source>
        <strain evidence="7">Bristol N2</strain>
    </source>
</reference>
<reference evidence="6" key="2">
    <citation type="journal article" date="2015" name="PLoS ONE">
        <title>Investigating the role of RIO protein kinases in Caenorhabditis elegans.</title>
        <authorList>
            <person name="Mendes T.K."/>
            <person name="Novakovic S."/>
            <person name="Raymant G."/>
            <person name="Bertram S.E."/>
            <person name="Esmaillie R."/>
            <person name="Nadarajan S."/>
            <person name="Breugelmans B."/>
            <person name="Hofmann A."/>
            <person name="Gasser R.B."/>
            <person name="Colaiacovo M.P."/>
            <person name="Boag P.R."/>
        </authorList>
    </citation>
    <scope>FUNCTION</scope>
    <scope>TISSUE SPECIFICITY</scope>
    <scope>DISRUPTION PHENOTYPE</scope>
</reference>
<dbReference type="EC" id="2.7.11.1" evidence="2"/>
<dbReference type="EMBL" id="BX284601">
    <property type="protein sequence ID" value="CAC70109.2"/>
    <property type="molecule type" value="Genomic_DNA"/>
</dbReference>
<dbReference type="RefSeq" id="NP_493544.2">
    <property type="nucleotide sequence ID" value="NM_061143.5"/>
</dbReference>
<dbReference type="SMR" id="Q95Q34"/>
<dbReference type="FunCoup" id="Q95Q34">
    <property type="interactions" value="3216"/>
</dbReference>
<dbReference type="STRING" id="6239.Y105E8B.3.1"/>
<dbReference type="PaxDb" id="6239-Y105E8B.3.2"/>
<dbReference type="PeptideAtlas" id="Q95Q34"/>
<dbReference type="EnsemblMetazoa" id="Y105E8B.3.1">
    <property type="protein sequence ID" value="Y105E8B.3.1"/>
    <property type="gene ID" value="WBGene00013688"/>
</dbReference>
<dbReference type="GeneID" id="173322"/>
<dbReference type="KEGG" id="cel:CELE_Y105E8B.3"/>
<dbReference type="UCSC" id="Y105E8B.3">
    <property type="organism name" value="c. elegans"/>
</dbReference>
<dbReference type="AGR" id="WB:WBGene00013688"/>
<dbReference type="CTD" id="173322"/>
<dbReference type="WormBase" id="Y105E8B.3">
    <property type="protein sequence ID" value="CE33542"/>
    <property type="gene ID" value="WBGene00013688"/>
    <property type="gene designation" value="riok-2"/>
</dbReference>
<dbReference type="eggNOG" id="KOG2268">
    <property type="taxonomic scope" value="Eukaryota"/>
</dbReference>
<dbReference type="GeneTree" id="ENSGT00390000003255"/>
<dbReference type="HOGENOM" id="CLU_018693_0_3_1"/>
<dbReference type="InParanoid" id="Q95Q34"/>
<dbReference type="OMA" id="MIHHENT"/>
<dbReference type="OrthoDB" id="10258631at2759"/>
<dbReference type="PhylomeDB" id="Q95Q34"/>
<dbReference type="PRO" id="PR:Q95Q34"/>
<dbReference type="Proteomes" id="UP000001940">
    <property type="component" value="Chromosome I"/>
</dbReference>
<dbReference type="Bgee" id="WBGene00013688">
    <property type="expression patterns" value="Expressed in adult organism and 4 other cell types or tissues"/>
</dbReference>
<dbReference type="GO" id="GO:0005829">
    <property type="term" value="C:cytosol"/>
    <property type="evidence" value="ECO:0000318"/>
    <property type="project" value="GO_Central"/>
</dbReference>
<dbReference type="GO" id="GO:0005634">
    <property type="term" value="C:nucleus"/>
    <property type="evidence" value="ECO:0000318"/>
    <property type="project" value="GO_Central"/>
</dbReference>
<dbReference type="GO" id="GO:0030688">
    <property type="term" value="C:preribosome, small subunit precursor"/>
    <property type="evidence" value="ECO:0000318"/>
    <property type="project" value="GO_Central"/>
</dbReference>
<dbReference type="GO" id="GO:0005524">
    <property type="term" value="F:ATP binding"/>
    <property type="evidence" value="ECO:0007669"/>
    <property type="project" value="UniProtKB-KW"/>
</dbReference>
<dbReference type="GO" id="GO:0046872">
    <property type="term" value="F:metal ion binding"/>
    <property type="evidence" value="ECO:0007669"/>
    <property type="project" value="UniProtKB-KW"/>
</dbReference>
<dbReference type="GO" id="GO:0004672">
    <property type="term" value="F:protein kinase activity"/>
    <property type="evidence" value="ECO:0000318"/>
    <property type="project" value="GO_Central"/>
</dbReference>
<dbReference type="GO" id="GO:0106310">
    <property type="term" value="F:protein serine kinase activity"/>
    <property type="evidence" value="ECO:0007669"/>
    <property type="project" value="RHEA"/>
</dbReference>
<dbReference type="GO" id="GO:0004674">
    <property type="term" value="F:protein serine/threonine kinase activity"/>
    <property type="evidence" value="ECO:0007669"/>
    <property type="project" value="UniProtKB-KW"/>
</dbReference>
<dbReference type="GO" id="GO:0030490">
    <property type="term" value="P:maturation of SSU-rRNA"/>
    <property type="evidence" value="ECO:0000318"/>
    <property type="project" value="GO_Central"/>
</dbReference>
<dbReference type="GO" id="GO:0002119">
    <property type="term" value="P:nematode larval development"/>
    <property type="evidence" value="ECO:0000315"/>
    <property type="project" value="WormBase"/>
</dbReference>
<dbReference type="CDD" id="cd05144">
    <property type="entry name" value="RIO2_C"/>
    <property type="match status" value="1"/>
</dbReference>
<dbReference type="FunFam" id="1.10.10.10:FF:000053">
    <property type="entry name" value="Serine/threonine-protein kinase RIO2"/>
    <property type="match status" value="1"/>
</dbReference>
<dbReference type="FunFam" id="1.10.510.10:FF:001305">
    <property type="entry name" value="Serine/threonine-protein kinase RIO2"/>
    <property type="match status" value="1"/>
</dbReference>
<dbReference type="FunFam" id="3.30.200.20:FF:000052">
    <property type="entry name" value="Serine/threonine-protein kinase RIO2"/>
    <property type="match status" value="1"/>
</dbReference>
<dbReference type="Gene3D" id="3.30.200.20">
    <property type="entry name" value="Phosphorylase Kinase, domain 1"/>
    <property type="match status" value="1"/>
</dbReference>
<dbReference type="Gene3D" id="1.10.510.10">
    <property type="entry name" value="Transferase(Phosphotransferase) domain 1"/>
    <property type="match status" value="1"/>
</dbReference>
<dbReference type="Gene3D" id="1.10.10.10">
    <property type="entry name" value="Winged helix-like DNA-binding domain superfamily/Winged helix DNA-binding domain"/>
    <property type="match status" value="1"/>
</dbReference>
<dbReference type="InterPro" id="IPR011009">
    <property type="entry name" value="Kinase-like_dom_sf"/>
</dbReference>
<dbReference type="InterPro" id="IPR030484">
    <property type="entry name" value="Rio2"/>
</dbReference>
<dbReference type="InterPro" id="IPR015285">
    <property type="entry name" value="RIO2_wHTH_N"/>
</dbReference>
<dbReference type="InterPro" id="IPR018934">
    <property type="entry name" value="RIO_dom"/>
</dbReference>
<dbReference type="InterPro" id="IPR000687">
    <property type="entry name" value="RIO_kinase"/>
</dbReference>
<dbReference type="InterPro" id="IPR018935">
    <property type="entry name" value="RIO_kinase_CS"/>
</dbReference>
<dbReference type="InterPro" id="IPR036388">
    <property type="entry name" value="WH-like_DNA-bd_sf"/>
</dbReference>
<dbReference type="InterPro" id="IPR036390">
    <property type="entry name" value="WH_DNA-bd_sf"/>
</dbReference>
<dbReference type="PANTHER" id="PTHR45852">
    <property type="entry name" value="SER/THR-PROTEIN KINASE RIO2"/>
    <property type="match status" value="1"/>
</dbReference>
<dbReference type="PANTHER" id="PTHR45852:SF1">
    <property type="entry name" value="SERINE_THREONINE-PROTEIN KINASE RIO2"/>
    <property type="match status" value="1"/>
</dbReference>
<dbReference type="Pfam" id="PF01163">
    <property type="entry name" value="RIO1"/>
    <property type="match status" value="1"/>
</dbReference>
<dbReference type="Pfam" id="PF09202">
    <property type="entry name" value="Rio2_N"/>
    <property type="match status" value="1"/>
</dbReference>
<dbReference type="SMART" id="SM00090">
    <property type="entry name" value="RIO"/>
    <property type="match status" value="1"/>
</dbReference>
<dbReference type="SUPFAM" id="SSF56112">
    <property type="entry name" value="Protein kinase-like (PK-like)"/>
    <property type="match status" value="1"/>
</dbReference>
<dbReference type="SUPFAM" id="SSF46785">
    <property type="entry name" value="Winged helix' DNA-binding domain"/>
    <property type="match status" value="1"/>
</dbReference>
<dbReference type="PROSITE" id="PS01245">
    <property type="entry name" value="RIO1"/>
    <property type="match status" value="1"/>
</dbReference>
<accession>Q95Q34</accession>
<gene>
    <name evidence="8" type="primary">riok-2</name>
    <name evidence="8" type="ORF">Y105E8B.3</name>
</gene>
<keyword id="KW-0067">ATP-binding</keyword>
<keyword id="KW-0418">Kinase</keyword>
<keyword id="KW-0460">Magnesium</keyword>
<keyword id="KW-0479">Metal-binding</keyword>
<keyword id="KW-0547">Nucleotide-binding</keyword>
<keyword id="KW-1185">Reference proteome</keyword>
<keyword id="KW-0723">Serine/threonine-protein kinase</keyword>
<keyword id="KW-0808">Transferase</keyword>